<organism>
    <name type="scientific">Coxiella burnetii (strain CbuG_Q212)</name>
    <name type="common">Coxiella burnetii (strain Q212)</name>
    <dbReference type="NCBI Taxonomy" id="434923"/>
    <lineage>
        <taxon>Bacteria</taxon>
        <taxon>Pseudomonadati</taxon>
        <taxon>Pseudomonadota</taxon>
        <taxon>Gammaproteobacteria</taxon>
        <taxon>Legionellales</taxon>
        <taxon>Coxiellaceae</taxon>
        <taxon>Coxiella</taxon>
    </lineage>
</organism>
<keyword id="KW-0687">Ribonucleoprotein</keyword>
<keyword id="KW-0689">Ribosomal protein</keyword>
<dbReference type="EMBL" id="CP001019">
    <property type="protein sequence ID" value="ACJ18816.1"/>
    <property type="molecule type" value="Genomic_DNA"/>
</dbReference>
<dbReference type="RefSeq" id="WP_005771287.1">
    <property type="nucleotide sequence ID" value="NC_011527.1"/>
</dbReference>
<dbReference type="SMR" id="B6J1I8"/>
<dbReference type="KEGG" id="cbg:CbuG_1522"/>
<dbReference type="HOGENOM" id="CLU_129084_2_1_6"/>
<dbReference type="GO" id="GO:0015934">
    <property type="term" value="C:large ribosomal subunit"/>
    <property type="evidence" value="ECO:0007669"/>
    <property type="project" value="InterPro"/>
</dbReference>
<dbReference type="GO" id="GO:0003735">
    <property type="term" value="F:structural constituent of ribosome"/>
    <property type="evidence" value="ECO:0007669"/>
    <property type="project" value="InterPro"/>
</dbReference>
<dbReference type="GO" id="GO:0006412">
    <property type="term" value="P:translation"/>
    <property type="evidence" value="ECO:0007669"/>
    <property type="project" value="UniProtKB-UniRule"/>
</dbReference>
<dbReference type="HAMAP" id="MF_00340">
    <property type="entry name" value="Ribosomal_bL32"/>
    <property type="match status" value="1"/>
</dbReference>
<dbReference type="InterPro" id="IPR002677">
    <property type="entry name" value="Ribosomal_bL32"/>
</dbReference>
<dbReference type="InterPro" id="IPR044957">
    <property type="entry name" value="Ribosomal_bL32_bact"/>
</dbReference>
<dbReference type="InterPro" id="IPR011332">
    <property type="entry name" value="Ribosomal_zn-bd"/>
</dbReference>
<dbReference type="NCBIfam" id="TIGR01031">
    <property type="entry name" value="rpmF_bact"/>
    <property type="match status" value="1"/>
</dbReference>
<dbReference type="PANTHER" id="PTHR35534">
    <property type="entry name" value="50S RIBOSOMAL PROTEIN L32"/>
    <property type="match status" value="1"/>
</dbReference>
<dbReference type="PANTHER" id="PTHR35534:SF1">
    <property type="entry name" value="LARGE RIBOSOMAL SUBUNIT PROTEIN BL32"/>
    <property type="match status" value="1"/>
</dbReference>
<dbReference type="Pfam" id="PF01783">
    <property type="entry name" value="Ribosomal_L32p"/>
    <property type="match status" value="1"/>
</dbReference>
<dbReference type="SUPFAM" id="SSF57829">
    <property type="entry name" value="Zn-binding ribosomal proteins"/>
    <property type="match status" value="1"/>
</dbReference>
<comment type="similarity">
    <text evidence="1">Belongs to the bacterial ribosomal protein bL32 family.</text>
</comment>
<sequence>MAVQKSRKTRSRRGMRRSHDALRGAMLSKDPTTGETHLRHHISPEGYYKGRQILTPKESYEDEE</sequence>
<gene>
    <name evidence="1" type="primary">rpmF</name>
    <name type="ordered locus">CbuG_1522</name>
</gene>
<name>RL32_COXB2</name>
<evidence type="ECO:0000255" key="1">
    <source>
        <dbReference type="HAMAP-Rule" id="MF_00340"/>
    </source>
</evidence>
<evidence type="ECO:0000256" key="2">
    <source>
        <dbReference type="SAM" id="MobiDB-lite"/>
    </source>
</evidence>
<evidence type="ECO:0000305" key="3"/>
<accession>B6J1I8</accession>
<protein>
    <recommendedName>
        <fullName evidence="1">Large ribosomal subunit protein bL32</fullName>
    </recommendedName>
    <alternativeName>
        <fullName evidence="3">50S ribosomal protein L32</fullName>
    </alternativeName>
</protein>
<proteinExistence type="inferred from homology"/>
<feature type="chain" id="PRO_1000120109" description="Large ribosomal subunit protein bL32">
    <location>
        <begin position="1"/>
        <end position="64"/>
    </location>
</feature>
<feature type="region of interest" description="Disordered" evidence="2">
    <location>
        <begin position="1"/>
        <end position="64"/>
    </location>
</feature>
<feature type="compositionally biased region" description="Basic residues" evidence="2">
    <location>
        <begin position="1"/>
        <end position="16"/>
    </location>
</feature>
<reference key="1">
    <citation type="journal article" date="2009" name="Infect. Immun.">
        <title>Comparative genomics reveal extensive transposon-mediated genomic plasticity and diversity among potential effector proteins within the genus Coxiella.</title>
        <authorList>
            <person name="Beare P.A."/>
            <person name="Unsworth N."/>
            <person name="Andoh M."/>
            <person name="Voth D.E."/>
            <person name="Omsland A."/>
            <person name="Gilk S.D."/>
            <person name="Williams K.P."/>
            <person name="Sobral B.W."/>
            <person name="Kupko J.J. III"/>
            <person name="Porcella S.F."/>
            <person name="Samuel J.E."/>
            <person name="Heinzen R.A."/>
        </authorList>
    </citation>
    <scope>NUCLEOTIDE SEQUENCE [LARGE SCALE GENOMIC DNA]</scope>
    <source>
        <strain>CbuG_Q212</strain>
    </source>
</reference>